<proteinExistence type="inferred from homology"/>
<protein>
    <recommendedName>
        <fullName evidence="1">Transcriptional repressor NrdR</fullName>
    </recommendedName>
</protein>
<evidence type="ECO:0000255" key="1">
    <source>
        <dbReference type="HAMAP-Rule" id="MF_00440"/>
    </source>
</evidence>
<accession>P67322</accession>
<accession>Q9A1D3</accession>
<comment type="function">
    <text evidence="1">Negatively regulates transcription of bacterial ribonucleotide reductase nrd genes and operons by binding to NrdR-boxes.</text>
</comment>
<comment type="cofactor">
    <cofactor evidence="1">
        <name>Zn(2+)</name>
        <dbReference type="ChEBI" id="CHEBI:29105"/>
    </cofactor>
    <text evidence="1">Binds 1 zinc ion.</text>
</comment>
<comment type="similarity">
    <text evidence="1">Belongs to the NrdR family.</text>
</comment>
<feature type="chain" id="PRO_0000182360" description="Transcriptional repressor NrdR">
    <location>
        <begin position="1"/>
        <end position="164"/>
    </location>
</feature>
<feature type="domain" description="ATP-cone" evidence="1">
    <location>
        <begin position="49"/>
        <end position="139"/>
    </location>
</feature>
<feature type="zinc finger region" evidence="1">
    <location>
        <begin position="3"/>
        <end position="34"/>
    </location>
</feature>
<sequence length="164" mass="19131">MRCPKCNYHKSSVVDSRQAEDGNTIRRRRECEQCHTRFTTFERVEELPLLVIKKDGTREQFSRDKILNGVVQSAQKRPVSSTDIENVISRIEQEVRTTYENEVSSTAIGNLVMDELAELDEITYVRFASVYKSFKDVDEIEELLQQITNRVRGKKKRLNNDETN</sequence>
<reference key="1">
    <citation type="journal article" date="2002" name="Proc. Natl. Acad. Sci. U.S.A.">
        <title>Genome sequence and comparative microarray analysis of serotype M18 group A Streptococcus strains associated with acute rheumatic fever outbreaks.</title>
        <authorList>
            <person name="Smoot J.C."/>
            <person name="Barbian K.D."/>
            <person name="Van Gompel J.J."/>
            <person name="Smoot L.M."/>
            <person name="Chaussee M.S."/>
            <person name="Sylva G.L."/>
            <person name="Sturdevant D.E."/>
            <person name="Ricklefs S.M."/>
            <person name="Porcella S.F."/>
            <person name="Parkins L.D."/>
            <person name="Beres S.B."/>
            <person name="Campbell D.S."/>
            <person name="Smith T.M."/>
            <person name="Zhang Q."/>
            <person name="Kapur V."/>
            <person name="Daly J.A."/>
            <person name="Veasy L.G."/>
            <person name="Musser J.M."/>
        </authorList>
    </citation>
    <scope>NUCLEOTIDE SEQUENCE [LARGE SCALE GENOMIC DNA]</scope>
    <source>
        <strain>MGAS8232</strain>
    </source>
</reference>
<name>NRDR_STRP8</name>
<keyword id="KW-0067">ATP-binding</keyword>
<keyword id="KW-0238">DNA-binding</keyword>
<keyword id="KW-0479">Metal-binding</keyword>
<keyword id="KW-0547">Nucleotide-binding</keyword>
<keyword id="KW-0678">Repressor</keyword>
<keyword id="KW-0804">Transcription</keyword>
<keyword id="KW-0805">Transcription regulation</keyword>
<keyword id="KW-0862">Zinc</keyword>
<keyword id="KW-0863">Zinc-finger</keyword>
<gene>
    <name evidence="1" type="primary">nrdR</name>
    <name type="ordered locus">spyM18_0330</name>
</gene>
<organism>
    <name type="scientific">Streptococcus pyogenes serotype M18 (strain MGAS8232)</name>
    <dbReference type="NCBI Taxonomy" id="186103"/>
    <lineage>
        <taxon>Bacteria</taxon>
        <taxon>Bacillati</taxon>
        <taxon>Bacillota</taxon>
        <taxon>Bacilli</taxon>
        <taxon>Lactobacillales</taxon>
        <taxon>Streptococcaceae</taxon>
        <taxon>Streptococcus</taxon>
    </lineage>
</organism>
<dbReference type="EMBL" id="AE009949">
    <property type="protein sequence ID" value="AAL97085.1"/>
    <property type="molecule type" value="Genomic_DNA"/>
</dbReference>
<dbReference type="RefSeq" id="WP_002985941.1">
    <property type="nucleotide sequence ID" value="NC_003485.1"/>
</dbReference>
<dbReference type="SMR" id="P67322"/>
<dbReference type="GeneID" id="69901381"/>
<dbReference type="KEGG" id="spm:spyM18_0330"/>
<dbReference type="HOGENOM" id="CLU_108412_0_0_9"/>
<dbReference type="GO" id="GO:0005524">
    <property type="term" value="F:ATP binding"/>
    <property type="evidence" value="ECO:0007669"/>
    <property type="project" value="UniProtKB-KW"/>
</dbReference>
<dbReference type="GO" id="GO:0003677">
    <property type="term" value="F:DNA binding"/>
    <property type="evidence" value="ECO:0007669"/>
    <property type="project" value="UniProtKB-KW"/>
</dbReference>
<dbReference type="GO" id="GO:0008270">
    <property type="term" value="F:zinc ion binding"/>
    <property type="evidence" value="ECO:0007669"/>
    <property type="project" value="UniProtKB-UniRule"/>
</dbReference>
<dbReference type="GO" id="GO:0045892">
    <property type="term" value="P:negative regulation of DNA-templated transcription"/>
    <property type="evidence" value="ECO:0007669"/>
    <property type="project" value="UniProtKB-UniRule"/>
</dbReference>
<dbReference type="HAMAP" id="MF_00440">
    <property type="entry name" value="NrdR"/>
    <property type="match status" value="1"/>
</dbReference>
<dbReference type="InterPro" id="IPR005144">
    <property type="entry name" value="ATP-cone_dom"/>
</dbReference>
<dbReference type="InterPro" id="IPR055173">
    <property type="entry name" value="NrdR-like_N"/>
</dbReference>
<dbReference type="InterPro" id="IPR003796">
    <property type="entry name" value="RNR_NrdR-like"/>
</dbReference>
<dbReference type="NCBIfam" id="TIGR00244">
    <property type="entry name" value="transcriptional regulator NrdR"/>
    <property type="match status" value="1"/>
</dbReference>
<dbReference type="PANTHER" id="PTHR30455">
    <property type="entry name" value="TRANSCRIPTIONAL REPRESSOR NRDR"/>
    <property type="match status" value="1"/>
</dbReference>
<dbReference type="PANTHER" id="PTHR30455:SF2">
    <property type="entry name" value="TRANSCRIPTIONAL REPRESSOR NRDR"/>
    <property type="match status" value="1"/>
</dbReference>
<dbReference type="Pfam" id="PF03477">
    <property type="entry name" value="ATP-cone"/>
    <property type="match status" value="1"/>
</dbReference>
<dbReference type="Pfam" id="PF22811">
    <property type="entry name" value="Zn_ribbon_NrdR"/>
    <property type="match status" value="1"/>
</dbReference>
<dbReference type="PROSITE" id="PS51161">
    <property type="entry name" value="ATP_CONE"/>
    <property type="match status" value="1"/>
</dbReference>